<organism>
    <name type="scientific">Aliivibrio fischeri (strain MJ11)</name>
    <name type="common">Vibrio fischeri</name>
    <dbReference type="NCBI Taxonomy" id="388396"/>
    <lineage>
        <taxon>Bacteria</taxon>
        <taxon>Pseudomonadati</taxon>
        <taxon>Pseudomonadota</taxon>
        <taxon>Gammaproteobacteria</taxon>
        <taxon>Vibrionales</taxon>
        <taxon>Vibrionaceae</taxon>
        <taxon>Aliivibrio</taxon>
    </lineage>
</organism>
<dbReference type="EC" id="1.7.99.1" evidence="1"/>
<dbReference type="EMBL" id="CP001133">
    <property type="protein sequence ID" value="ACH64570.1"/>
    <property type="molecule type" value="Genomic_DNA"/>
</dbReference>
<dbReference type="RefSeq" id="WP_012535620.1">
    <property type="nucleotide sequence ID" value="NC_011186.1"/>
</dbReference>
<dbReference type="SMR" id="B5EV28"/>
<dbReference type="KEGG" id="vfm:VFMJ11_A0998"/>
<dbReference type="HOGENOM" id="CLU_038344_2_0_6"/>
<dbReference type="Proteomes" id="UP000001857">
    <property type="component" value="Chromosome II"/>
</dbReference>
<dbReference type="GO" id="GO:0005737">
    <property type="term" value="C:cytoplasm"/>
    <property type="evidence" value="ECO:0007669"/>
    <property type="project" value="UniProtKB-SubCell"/>
</dbReference>
<dbReference type="GO" id="GO:0051537">
    <property type="term" value="F:2 iron, 2 sulfur cluster binding"/>
    <property type="evidence" value="ECO:0007669"/>
    <property type="project" value="UniProtKB-KW"/>
</dbReference>
<dbReference type="GO" id="GO:0050418">
    <property type="term" value="F:hydroxylamine reductase activity"/>
    <property type="evidence" value="ECO:0007669"/>
    <property type="project" value="UniProtKB-UniRule"/>
</dbReference>
<dbReference type="GO" id="GO:0046872">
    <property type="term" value="F:metal ion binding"/>
    <property type="evidence" value="ECO:0007669"/>
    <property type="project" value="UniProtKB-KW"/>
</dbReference>
<dbReference type="GO" id="GO:0004601">
    <property type="term" value="F:peroxidase activity"/>
    <property type="evidence" value="ECO:0007669"/>
    <property type="project" value="TreeGrafter"/>
</dbReference>
<dbReference type="GO" id="GO:0042542">
    <property type="term" value="P:response to hydrogen peroxide"/>
    <property type="evidence" value="ECO:0007669"/>
    <property type="project" value="TreeGrafter"/>
</dbReference>
<dbReference type="CDD" id="cd01914">
    <property type="entry name" value="HCP"/>
    <property type="match status" value="1"/>
</dbReference>
<dbReference type="FunFam" id="1.20.1270.20:FF:000001">
    <property type="entry name" value="Hydroxylamine reductase"/>
    <property type="match status" value="1"/>
</dbReference>
<dbReference type="FunFam" id="1.20.1270.20:FF:000002">
    <property type="entry name" value="Hydroxylamine reductase"/>
    <property type="match status" value="1"/>
</dbReference>
<dbReference type="FunFam" id="3.40.50.2030:FF:000001">
    <property type="entry name" value="Hydroxylamine reductase"/>
    <property type="match status" value="1"/>
</dbReference>
<dbReference type="FunFam" id="3.40.50.2030:FF:000002">
    <property type="entry name" value="Hydroxylamine reductase"/>
    <property type="match status" value="1"/>
</dbReference>
<dbReference type="Gene3D" id="1.20.1270.20">
    <property type="match status" value="2"/>
</dbReference>
<dbReference type="Gene3D" id="3.40.50.2030">
    <property type="match status" value="2"/>
</dbReference>
<dbReference type="HAMAP" id="MF_00069">
    <property type="entry name" value="Hydroxylam_reduct"/>
    <property type="match status" value="1"/>
</dbReference>
<dbReference type="InterPro" id="IPR004137">
    <property type="entry name" value="HCP/CODH"/>
</dbReference>
<dbReference type="InterPro" id="IPR010048">
    <property type="entry name" value="Hydroxylam_reduct"/>
</dbReference>
<dbReference type="InterPro" id="IPR016099">
    <property type="entry name" value="Prismane-like_a/b-sand"/>
</dbReference>
<dbReference type="InterPro" id="IPR011254">
    <property type="entry name" value="Prismane-like_sf"/>
</dbReference>
<dbReference type="InterPro" id="IPR016100">
    <property type="entry name" value="Prismane_a-bundle"/>
</dbReference>
<dbReference type="NCBIfam" id="TIGR01703">
    <property type="entry name" value="hybrid_clust"/>
    <property type="match status" value="1"/>
</dbReference>
<dbReference type="NCBIfam" id="NF003658">
    <property type="entry name" value="PRK05290.1"/>
    <property type="match status" value="1"/>
</dbReference>
<dbReference type="PANTHER" id="PTHR30109">
    <property type="entry name" value="HYDROXYLAMINE REDUCTASE"/>
    <property type="match status" value="1"/>
</dbReference>
<dbReference type="PANTHER" id="PTHR30109:SF0">
    <property type="entry name" value="HYDROXYLAMINE REDUCTASE"/>
    <property type="match status" value="1"/>
</dbReference>
<dbReference type="Pfam" id="PF03063">
    <property type="entry name" value="Prismane"/>
    <property type="match status" value="1"/>
</dbReference>
<dbReference type="PIRSF" id="PIRSF000076">
    <property type="entry name" value="HCP"/>
    <property type="match status" value="1"/>
</dbReference>
<dbReference type="SUPFAM" id="SSF56821">
    <property type="entry name" value="Prismane protein-like"/>
    <property type="match status" value="1"/>
</dbReference>
<protein>
    <recommendedName>
        <fullName evidence="1">Hydroxylamine reductase</fullName>
        <ecNumber evidence="1">1.7.99.1</ecNumber>
    </recommendedName>
    <alternativeName>
        <fullName evidence="1">Hybrid-cluster protein</fullName>
        <shortName evidence="1">HCP</shortName>
    </alternativeName>
    <alternativeName>
        <fullName evidence="1">Prismane protein</fullName>
    </alternativeName>
</protein>
<comment type="function">
    <text evidence="1">Catalyzes the reduction of hydroxylamine to form NH(3) and H(2)O.</text>
</comment>
<comment type="catalytic activity">
    <reaction evidence="1">
        <text>A + NH4(+) + H2O = hydroxylamine + AH2 + H(+)</text>
        <dbReference type="Rhea" id="RHEA:22052"/>
        <dbReference type="ChEBI" id="CHEBI:13193"/>
        <dbReference type="ChEBI" id="CHEBI:15377"/>
        <dbReference type="ChEBI" id="CHEBI:15378"/>
        <dbReference type="ChEBI" id="CHEBI:15429"/>
        <dbReference type="ChEBI" id="CHEBI:17499"/>
        <dbReference type="ChEBI" id="CHEBI:28938"/>
        <dbReference type="EC" id="1.7.99.1"/>
    </reaction>
</comment>
<comment type="cofactor">
    <cofactor evidence="1">
        <name>[2Fe-2S] cluster</name>
        <dbReference type="ChEBI" id="CHEBI:190135"/>
    </cofactor>
    <text evidence="1">Binds 1 [2Fe-2S] cluster.</text>
</comment>
<comment type="cofactor">
    <cofactor evidence="1">
        <name>hybrid [4Fe-2O-2S] cluster</name>
        <dbReference type="ChEBI" id="CHEBI:60519"/>
    </cofactor>
    <text evidence="1">Binds 1 hybrid [4Fe-2O-2S] cluster.</text>
</comment>
<comment type="subcellular location">
    <subcellularLocation>
        <location evidence="1">Cytoplasm</location>
    </subcellularLocation>
</comment>
<comment type="similarity">
    <text evidence="1">Belongs to the HCP family.</text>
</comment>
<gene>
    <name evidence="1" type="primary">hcp</name>
    <name type="ordered locus">VFMJ11_A0998</name>
</gene>
<name>HCP_ALIFM</name>
<feature type="chain" id="PRO_1000092357" description="Hydroxylamine reductase">
    <location>
        <begin position="1"/>
        <end position="553"/>
    </location>
</feature>
<feature type="binding site" evidence="1">
    <location>
        <position position="3"/>
    </location>
    <ligand>
        <name>[2Fe-2S] cluster</name>
        <dbReference type="ChEBI" id="CHEBI:190135"/>
    </ligand>
</feature>
<feature type="binding site" evidence="1">
    <location>
        <position position="6"/>
    </location>
    <ligand>
        <name>[2Fe-2S] cluster</name>
        <dbReference type="ChEBI" id="CHEBI:190135"/>
    </ligand>
</feature>
<feature type="binding site" evidence="1">
    <location>
        <position position="18"/>
    </location>
    <ligand>
        <name>[2Fe-2S] cluster</name>
        <dbReference type="ChEBI" id="CHEBI:190135"/>
    </ligand>
</feature>
<feature type="binding site" evidence="1">
    <location>
        <position position="25"/>
    </location>
    <ligand>
        <name>[2Fe-2S] cluster</name>
        <dbReference type="ChEBI" id="CHEBI:190135"/>
    </ligand>
</feature>
<feature type="binding site" evidence="1">
    <location>
        <position position="252"/>
    </location>
    <ligand>
        <name>hybrid [4Fe-2O-2S] cluster</name>
        <dbReference type="ChEBI" id="CHEBI:60519"/>
    </ligand>
</feature>
<feature type="binding site" evidence="1">
    <location>
        <position position="276"/>
    </location>
    <ligand>
        <name>hybrid [4Fe-2O-2S] cluster</name>
        <dbReference type="ChEBI" id="CHEBI:60519"/>
    </ligand>
</feature>
<feature type="binding site" evidence="1">
    <location>
        <position position="320"/>
    </location>
    <ligand>
        <name>hybrid [4Fe-2O-2S] cluster</name>
        <dbReference type="ChEBI" id="CHEBI:60519"/>
    </ligand>
</feature>
<feature type="binding site" description="via persulfide group" evidence="1">
    <location>
        <position position="408"/>
    </location>
    <ligand>
        <name>hybrid [4Fe-2O-2S] cluster</name>
        <dbReference type="ChEBI" id="CHEBI:60519"/>
    </ligand>
</feature>
<feature type="binding site" evidence="1">
    <location>
        <position position="436"/>
    </location>
    <ligand>
        <name>hybrid [4Fe-2O-2S] cluster</name>
        <dbReference type="ChEBI" id="CHEBI:60519"/>
    </ligand>
</feature>
<feature type="binding site" evidence="1">
    <location>
        <position position="461"/>
    </location>
    <ligand>
        <name>hybrid [4Fe-2O-2S] cluster</name>
        <dbReference type="ChEBI" id="CHEBI:60519"/>
    </ligand>
</feature>
<feature type="binding site" evidence="1">
    <location>
        <position position="495"/>
    </location>
    <ligand>
        <name>hybrid [4Fe-2O-2S] cluster</name>
        <dbReference type="ChEBI" id="CHEBI:60519"/>
    </ligand>
</feature>
<feature type="binding site" evidence="1">
    <location>
        <position position="497"/>
    </location>
    <ligand>
        <name>hybrid [4Fe-2O-2S] cluster</name>
        <dbReference type="ChEBI" id="CHEBI:60519"/>
    </ligand>
</feature>
<feature type="modified residue" description="Cysteine persulfide" evidence="1">
    <location>
        <position position="408"/>
    </location>
</feature>
<proteinExistence type="inferred from homology"/>
<accession>B5EV28</accession>
<keyword id="KW-0001">2Fe-2S</keyword>
<keyword id="KW-0963">Cytoplasm</keyword>
<keyword id="KW-0408">Iron</keyword>
<keyword id="KW-0411">Iron-sulfur</keyword>
<keyword id="KW-0479">Metal-binding</keyword>
<keyword id="KW-0560">Oxidoreductase</keyword>
<sequence>MFCIQCEQTIQTPTTKGCSFAQGMCGKTAEVSDLQDILVYALQGVSFWAEQGRKVNVIFDEIDQWAPKAFFATLTNVNFDPERVIEFALQAQAYKQQLEETVRAAATVTNTELDELSPAAKFELPTEAEQIIALAPQAAVNRGHETQHEDIIGLRLLCLYGLKGAAAYMEHARVLGQTDKDVFAEYHQIMAWLGTDPTDLGELLDCSMKIGLMNYRIMEMLDTGETDTFGHPEPSQVNVKTIEGKCILVSGHDLHDLEKILQQTEGKGINVYTNGEMLPAHSYPELKKYPHLVGNYGSAWQNQQKEFANFPGAIVMTSNCLLNPNVGQYADRLFTRSIVGWPGVAHIEGDDFTTVIDCALAQEGFKHNEIEQMITVGFGRNALMAAAPAVVEQVKEGNISHFFLVGGCDGDKSERSYYTDFTAQAPEDSVILTLACGKYRFNKNQFGDINGIPRLLDVGQCNDAYSAIQLALALAKEFDCDINELPLTLVLSWFEQKAIVILLTLFALGVKGIYTGPTAPAFLTDNLLAIIQEKFDMRSIGNVEDDLKAILAA</sequence>
<reference key="1">
    <citation type="submission" date="2008-08" db="EMBL/GenBank/DDBJ databases">
        <title>Complete sequence of Vibrio fischeri strain MJ11.</title>
        <authorList>
            <person name="Mandel M.J."/>
            <person name="Stabb E.V."/>
            <person name="Ruby E.G."/>
            <person name="Ferriera S."/>
            <person name="Johnson J."/>
            <person name="Kravitz S."/>
            <person name="Beeson K."/>
            <person name="Sutton G."/>
            <person name="Rogers Y.-H."/>
            <person name="Friedman R."/>
            <person name="Frazier M."/>
            <person name="Venter J.C."/>
        </authorList>
    </citation>
    <scope>NUCLEOTIDE SEQUENCE [LARGE SCALE GENOMIC DNA]</scope>
    <source>
        <strain>MJ11</strain>
    </source>
</reference>
<evidence type="ECO:0000255" key="1">
    <source>
        <dbReference type="HAMAP-Rule" id="MF_00069"/>
    </source>
</evidence>